<organism>
    <name type="scientific">Staphylococcus aureus (strain MSSA476)</name>
    <dbReference type="NCBI Taxonomy" id="282459"/>
    <lineage>
        <taxon>Bacteria</taxon>
        <taxon>Bacillati</taxon>
        <taxon>Bacillota</taxon>
        <taxon>Bacilli</taxon>
        <taxon>Bacillales</taxon>
        <taxon>Staphylococcaceae</taxon>
        <taxon>Staphylococcus</taxon>
    </lineage>
</organism>
<gene>
    <name type="ordered locus">SAS0714</name>
</gene>
<proteinExistence type="inferred from homology"/>
<name>Y714_STAAS</name>
<feature type="chain" id="PRO_0000209784" description="DegV domain-containing protein SAS0714">
    <location>
        <begin position="1"/>
        <end position="288"/>
    </location>
</feature>
<feature type="domain" description="DegV" evidence="3">
    <location>
        <begin position="3"/>
        <end position="282"/>
    </location>
</feature>
<feature type="binding site" evidence="2">
    <location>
        <position position="62"/>
    </location>
    <ligand>
        <name>hexadecanoate</name>
        <dbReference type="ChEBI" id="CHEBI:7896"/>
    </ligand>
</feature>
<feature type="binding site" evidence="2">
    <location>
        <position position="95"/>
    </location>
    <ligand>
        <name>hexadecanoate</name>
        <dbReference type="ChEBI" id="CHEBI:7896"/>
    </ligand>
</feature>
<keyword id="KW-0446">Lipid-binding</keyword>
<protein>
    <recommendedName>
        <fullName>DegV domain-containing protein SAS0714</fullName>
    </recommendedName>
</protein>
<sequence>MKIAVMTDSTSYLSQDLIDKYNIQIAPLSVTFDDGKNFTESNEIAIEEFYNKMASSQTIPTTSQPAIGEWITKYEMLRDQGYTDIIVICLSSGISGSYQSSYQAGEMVEGVNVHAFDSKLAAMIEGCYVLRAIEMVEEGYEPQQIIDDLTNMREHTGAYLIVDDLKNLQKSGRITGAQAWVGTLLKMKPVLKFEDGKIIPEEKVRTKKRAIQTLEKKVLDIVKDFEEVTLFVINGDHFEDGQALYKKLQDDCPSAYQVAYSEFGPVVAAHLGSGGLGLGYVGRKIRLT</sequence>
<evidence type="ECO:0000250" key="1"/>
<evidence type="ECO:0000250" key="2">
    <source>
        <dbReference type="UniProtKB" id="Q9X1H9"/>
    </source>
</evidence>
<evidence type="ECO:0000255" key="3">
    <source>
        <dbReference type="PROSITE-ProRule" id="PRU00815"/>
    </source>
</evidence>
<accession>Q6GB81</accession>
<dbReference type="EMBL" id="BX571857">
    <property type="protein sequence ID" value="CAG42490.1"/>
    <property type="molecule type" value="Genomic_DNA"/>
</dbReference>
<dbReference type="SMR" id="Q6GB81"/>
<dbReference type="KEGG" id="sas:SAS0714"/>
<dbReference type="HOGENOM" id="CLU_048251_3_1_9"/>
<dbReference type="GO" id="GO:0008289">
    <property type="term" value="F:lipid binding"/>
    <property type="evidence" value="ECO:0007669"/>
    <property type="project" value="UniProtKB-KW"/>
</dbReference>
<dbReference type="Gene3D" id="3.30.1180.10">
    <property type="match status" value="1"/>
</dbReference>
<dbReference type="Gene3D" id="3.40.50.10170">
    <property type="match status" value="1"/>
</dbReference>
<dbReference type="InterPro" id="IPR003797">
    <property type="entry name" value="DegV"/>
</dbReference>
<dbReference type="InterPro" id="IPR043168">
    <property type="entry name" value="DegV_C"/>
</dbReference>
<dbReference type="InterPro" id="IPR050270">
    <property type="entry name" value="DegV_domain_contain"/>
</dbReference>
<dbReference type="NCBIfam" id="TIGR00762">
    <property type="entry name" value="DegV"/>
    <property type="match status" value="1"/>
</dbReference>
<dbReference type="NCBIfam" id="NF038249">
    <property type="entry name" value="fatty_FakB1"/>
    <property type="match status" value="1"/>
</dbReference>
<dbReference type="PANTHER" id="PTHR33434">
    <property type="entry name" value="DEGV DOMAIN-CONTAINING PROTEIN DR_1986-RELATED"/>
    <property type="match status" value="1"/>
</dbReference>
<dbReference type="PANTHER" id="PTHR33434:SF2">
    <property type="entry name" value="FATTY ACID-BINDING PROTEIN TM_1468"/>
    <property type="match status" value="1"/>
</dbReference>
<dbReference type="Pfam" id="PF02645">
    <property type="entry name" value="DegV"/>
    <property type="match status" value="1"/>
</dbReference>
<dbReference type="SUPFAM" id="SSF82549">
    <property type="entry name" value="DAK1/DegV-like"/>
    <property type="match status" value="1"/>
</dbReference>
<dbReference type="PROSITE" id="PS51482">
    <property type="entry name" value="DEGV"/>
    <property type="match status" value="1"/>
</dbReference>
<comment type="function">
    <text evidence="1">May bind long-chain fatty acids, such as palmitate, and may play a role in lipid transport or fatty acid metabolism.</text>
</comment>
<reference key="1">
    <citation type="journal article" date="2004" name="Proc. Natl. Acad. Sci. U.S.A.">
        <title>Complete genomes of two clinical Staphylococcus aureus strains: evidence for the rapid evolution of virulence and drug resistance.</title>
        <authorList>
            <person name="Holden M.T.G."/>
            <person name="Feil E.J."/>
            <person name="Lindsay J.A."/>
            <person name="Peacock S.J."/>
            <person name="Day N.P.J."/>
            <person name="Enright M.C."/>
            <person name="Foster T.J."/>
            <person name="Moore C.E."/>
            <person name="Hurst L."/>
            <person name="Atkin R."/>
            <person name="Barron A."/>
            <person name="Bason N."/>
            <person name="Bentley S.D."/>
            <person name="Chillingworth C."/>
            <person name="Chillingworth T."/>
            <person name="Churcher C."/>
            <person name="Clark L."/>
            <person name="Corton C."/>
            <person name="Cronin A."/>
            <person name="Doggett J."/>
            <person name="Dowd L."/>
            <person name="Feltwell T."/>
            <person name="Hance Z."/>
            <person name="Harris B."/>
            <person name="Hauser H."/>
            <person name="Holroyd S."/>
            <person name="Jagels K."/>
            <person name="James K.D."/>
            <person name="Lennard N."/>
            <person name="Line A."/>
            <person name="Mayes R."/>
            <person name="Moule S."/>
            <person name="Mungall K."/>
            <person name="Ormond D."/>
            <person name="Quail M.A."/>
            <person name="Rabbinowitsch E."/>
            <person name="Rutherford K.M."/>
            <person name="Sanders M."/>
            <person name="Sharp S."/>
            <person name="Simmonds M."/>
            <person name="Stevens K."/>
            <person name="Whitehead S."/>
            <person name="Barrell B.G."/>
            <person name="Spratt B.G."/>
            <person name="Parkhill J."/>
        </authorList>
    </citation>
    <scope>NUCLEOTIDE SEQUENCE [LARGE SCALE GENOMIC DNA]</scope>
    <source>
        <strain>MSSA476</strain>
    </source>
</reference>